<dbReference type="EMBL" id="CP000240">
    <property type="protein sequence ID" value="ABD01368.1"/>
    <property type="molecule type" value="Genomic_DNA"/>
</dbReference>
<dbReference type="RefSeq" id="WP_011432037.1">
    <property type="nucleotide sequence ID" value="NC_007776.1"/>
</dbReference>
<dbReference type="SMR" id="Q2JPC2"/>
<dbReference type="STRING" id="321332.CYB_0372"/>
<dbReference type="KEGG" id="cyb:CYB_0372"/>
<dbReference type="eggNOG" id="COG1615">
    <property type="taxonomic scope" value="Bacteria"/>
</dbReference>
<dbReference type="HOGENOM" id="CLU_007733_0_0_3"/>
<dbReference type="OrthoDB" id="9763654at2"/>
<dbReference type="Proteomes" id="UP000001938">
    <property type="component" value="Chromosome"/>
</dbReference>
<dbReference type="GO" id="GO:0005576">
    <property type="term" value="C:extracellular region"/>
    <property type="evidence" value="ECO:0007669"/>
    <property type="project" value="TreeGrafter"/>
</dbReference>
<dbReference type="GO" id="GO:0005886">
    <property type="term" value="C:plasma membrane"/>
    <property type="evidence" value="ECO:0007669"/>
    <property type="project" value="UniProtKB-SubCell"/>
</dbReference>
<dbReference type="HAMAP" id="MF_01600">
    <property type="entry name" value="UPF0182"/>
    <property type="match status" value="1"/>
</dbReference>
<dbReference type="InterPro" id="IPR005372">
    <property type="entry name" value="UPF0182"/>
</dbReference>
<dbReference type="PANTHER" id="PTHR39344">
    <property type="entry name" value="UPF0182 PROTEIN SLL1060"/>
    <property type="match status" value="1"/>
</dbReference>
<dbReference type="PANTHER" id="PTHR39344:SF1">
    <property type="entry name" value="UPF0182 PROTEIN SLL1060"/>
    <property type="match status" value="1"/>
</dbReference>
<dbReference type="Pfam" id="PF03699">
    <property type="entry name" value="UPF0182"/>
    <property type="match status" value="1"/>
</dbReference>
<gene>
    <name type="ordered locus">CYB_0372</name>
</gene>
<reference key="1">
    <citation type="journal article" date="2007" name="ISME J.">
        <title>Population level functional diversity in a microbial community revealed by comparative genomic and metagenomic analyses.</title>
        <authorList>
            <person name="Bhaya D."/>
            <person name="Grossman A.R."/>
            <person name="Steunou A.-S."/>
            <person name="Khuri N."/>
            <person name="Cohan F.M."/>
            <person name="Hamamura N."/>
            <person name="Melendrez M.C."/>
            <person name="Bateson M.M."/>
            <person name="Ward D.M."/>
            <person name="Heidelberg J.F."/>
        </authorList>
    </citation>
    <scope>NUCLEOTIDE SEQUENCE [LARGE SCALE GENOMIC DNA]</scope>
    <source>
        <strain>JA-2-3B'a(2-13)</strain>
    </source>
</reference>
<proteinExistence type="inferred from homology"/>
<protein>
    <recommendedName>
        <fullName evidence="1">UPF0182 protein CYB_0372</fullName>
    </recommendedName>
</protein>
<keyword id="KW-1003">Cell membrane</keyword>
<keyword id="KW-0472">Membrane</keyword>
<keyword id="KW-1185">Reference proteome</keyword>
<keyword id="KW-0812">Transmembrane</keyword>
<keyword id="KW-1133">Transmembrane helix</keyword>
<comment type="subcellular location">
    <subcellularLocation>
        <location evidence="1">Cell membrane</location>
        <topology evidence="1">Multi-pass membrane protein</topology>
    </subcellularLocation>
</comment>
<comment type="similarity">
    <text evidence="1">Belongs to the UPF0182 family.</text>
</comment>
<organism>
    <name type="scientific">Synechococcus sp. (strain JA-2-3B'a(2-13))</name>
    <name type="common">Cyanobacteria bacterium Yellowstone B-Prime</name>
    <dbReference type="NCBI Taxonomy" id="321332"/>
    <lineage>
        <taxon>Bacteria</taxon>
        <taxon>Bacillati</taxon>
        <taxon>Cyanobacteriota</taxon>
        <taxon>Cyanophyceae</taxon>
        <taxon>Synechococcales</taxon>
        <taxon>Synechococcaceae</taxon>
        <taxon>Synechococcus</taxon>
    </lineage>
</organism>
<accession>Q2JPC2</accession>
<feature type="chain" id="PRO_0000291298" description="UPF0182 protein CYB_0372">
    <location>
        <begin position="1"/>
        <end position="847"/>
    </location>
</feature>
<feature type="transmembrane region" description="Helical" evidence="1">
    <location>
        <begin position="7"/>
        <end position="27"/>
    </location>
</feature>
<feature type="transmembrane region" description="Helical" evidence="1">
    <location>
        <begin position="51"/>
        <end position="71"/>
    </location>
</feature>
<feature type="transmembrane region" description="Helical" evidence="1">
    <location>
        <begin position="76"/>
        <end position="96"/>
    </location>
</feature>
<feature type="transmembrane region" description="Helical" evidence="1">
    <location>
        <begin position="141"/>
        <end position="161"/>
    </location>
</feature>
<feature type="transmembrane region" description="Helical" evidence="1">
    <location>
        <begin position="168"/>
        <end position="188"/>
    </location>
</feature>
<feature type="transmembrane region" description="Helical" evidence="1">
    <location>
        <begin position="220"/>
        <end position="240"/>
    </location>
</feature>
<feature type="transmembrane region" description="Helical" evidence="1">
    <location>
        <begin position="259"/>
        <end position="279"/>
    </location>
</feature>
<name>Y372_SYNJB</name>
<evidence type="ECO:0000255" key="1">
    <source>
        <dbReference type="HAMAP-Rule" id="MF_01600"/>
    </source>
</evidence>
<sequence>MQRLRRGLFLLLGVGLGILAITGLAAFYVDLAWFAELHALPVLWTRVIARWGLGLGAFLFALAVTGSNICSCWRGATLAGAWAIATGLSVFFAGSLSNHWFTLLLWLNQGPVGESDPIFNRDLGFFLFSLPFWETLQHWCFNLVLLTLIAVVLIYLVELGLSEQRLTLALSLYAQRHLLILGGSLFLIRAWGHWLERYELLYSTRGVVFGAGFADVHATLPATTLMSGVAGLTAVGFWALARQGIRLNLPFLKSWCPSWASSLLAPAILWGAYLGFGLLTTQLYPQLVQTFLVTPNELELERPYIEDNIRFTRAGFGLADVEVQPFPEGGALTWEILQQNQSTLSNVRLWDADPLLATYRQLQEIRPYYQFPYVNVDRYRIGGELRQVMHAARELDFAQVPPAAQTWVNRRFFYTHGYGLTLSPVNVVTPEGLPDFFLSDIPPRVSPRYPEVASVLRVEQPALYYGELTTTDVFVGAEARELDYPAAERYVYSSYRGSGGVPIPHLWQRFLYAWHFGDLRILLSRELSSATRFLYRRQIRERIRRVMPFLLYDRDPYLVIQGGKLYWFFDAYTTSSRYPYSEHLPGFPFNYIRNSVKAVMDAYNGSIDWYIADPRDPLIQAYARIYPTLFKPLEAMPEPLRQHIRYPQDLFRLQAQQFATYHMTDPRLFYNREDQWQIPGQFRNRRRIPMQPQYLILTLPRDPQGVANHTPEFVLLSPYAPVNKQNMVAWIAARCDGENYGKLLVYEFSKQRLIYGPEQVEARVNQDPLISEQISLWNQHGSRVNLGTLLVIPIETSLLYVQPLYIEAEQGRLPQLTRVIAAYEDRVVMEPTLGQALEALFLPRGSR</sequence>